<keyword id="KW-0963">Cytoplasm</keyword>
<keyword id="KW-0342">GTP-binding</keyword>
<keyword id="KW-0547">Nucleotide-binding</keyword>
<keyword id="KW-0648">Protein biosynthesis</keyword>
<protein>
    <recommendedName>
        <fullName evidence="1">Peptide chain release factor 3</fullName>
        <shortName evidence="1">RF-3</shortName>
    </recommendedName>
</protein>
<proteinExistence type="inferred from homology"/>
<feature type="chain" id="PRO_1000193523" description="Peptide chain release factor 3">
    <location>
        <begin position="1"/>
        <end position="528"/>
    </location>
</feature>
<feature type="domain" description="tr-type G">
    <location>
        <begin position="10"/>
        <end position="279"/>
    </location>
</feature>
<feature type="binding site" evidence="1">
    <location>
        <begin position="19"/>
        <end position="26"/>
    </location>
    <ligand>
        <name>GTP</name>
        <dbReference type="ChEBI" id="CHEBI:37565"/>
    </ligand>
</feature>
<feature type="binding site" evidence="1">
    <location>
        <begin position="87"/>
        <end position="91"/>
    </location>
    <ligand>
        <name>GTP</name>
        <dbReference type="ChEBI" id="CHEBI:37565"/>
    </ligand>
</feature>
<feature type="binding site" evidence="1">
    <location>
        <begin position="141"/>
        <end position="144"/>
    </location>
    <ligand>
        <name>GTP</name>
        <dbReference type="ChEBI" id="CHEBI:37565"/>
    </ligand>
</feature>
<gene>
    <name evidence="1" type="primary">prfC</name>
    <name type="ordered locus">UTI89_C5144</name>
</gene>
<organism>
    <name type="scientific">Escherichia coli (strain UTI89 / UPEC)</name>
    <dbReference type="NCBI Taxonomy" id="364106"/>
    <lineage>
        <taxon>Bacteria</taxon>
        <taxon>Pseudomonadati</taxon>
        <taxon>Pseudomonadota</taxon>
        <taxon>Gammaproteobacteria</taxon>
        <taxon>Enterobacterales</taxon>
        <taxon>Enterobacteriaceae</taxon>
        <taxon>Escherichia</taxon>
    </lineage>
</organism>
<comment type="function">
    <text evidence="1">Increases the formation of ribosomal termination complexes and stimulates activities of RF-1 and RF-2. It binds guanine nucleotides and has strong preference for UGA stop codons. It may interact directly with the ribosome. The stimulation of RF-1 and RF-2 is significantly reduced by GTP and GDP, but not by GMP.</text>
</comment>
<comment type="subcellular location">
    <subcellularLocation>
        <location evidence="1">Cytoplasm</location>
    </subcellularLocation>
</comment>
<comment type="similarity">
    <text evidence="1">Belongs to the TRAFAC class translation factor GTPase superfamily. Classic translation factor GTPase family. PrfC subfamily.</text>
</comment>
<evidence type="ECO:0000255" key="1">
    <source>
        <dbReference type="HAMAP-Rule" id="MF_00072"/>
    </source>
</evidence>
<sequence length="528" mass="59328">MTSLLAAEVAKRRTFAIISHPDAGKTTITEKVLLFGQAIQTAGTVKGRGSNQHAKSDWMEMEKQRGISITTSVMQFPYHDCLVNLLDTPGHEDFSEDTYRTLTAVDCCLMVIDAAKGVEDRTRKLMEVTRLRDTPILTFMNKLDRDIRDPMELLDEVENELKIGCAPITWPIGCGKLFKGVYHLYKDETYLYQSGKGHTIQEVRIVKGLNNPDLDAAVGEDLAQQLRDELELVKGASNEFDKELFLAGEITPVFFGTALGNFGVDHMLDGLVEWAPAPMPRQTDTRTVEASEDKFTGFVFKIQANMDPKHRDRVAFMRVVSGKYEKGMKLRQVRTAKDVVISDALTFMAGDRSHVEEAYPGDILGLHNHGTIQIGDTFTQGEMMKFTGIPNFAPELFRRIRLKDPLKQKQLLKGLVQLSEEGAVQVFRPISNNDLIVGAVGVLQFDVVVARLKSEYNVEAVYESVNVATARWVECADAKKFEEFKRKNESQLALDGGDNLAYIATSMVNLRLAQERYPDVQFHQTREH</sequence>
<name>RF3_ECOUT</name>
<dbReference type="EMBL" id="CP000243">
    <property type="protein sequence ID" value="ABE10544.1"/>
    <property type="molecule type" value="Genomic_DNA"/>
</dbReference>
<dbReference type="RefSeq" id="WP_000202563.1">
    <property type="nucleotide sequence ID" value="NZ_CP064825.1"/>
</dbReference>
<dbReference type="SMR" id="Q1R270"/>
<dbReference type="GeneID" id="75058942"/>
<dbReference type="KEGG" id="eci:UTI89_C5144"/>
<dbReference type="HOGENOM" id="CLU_002794_2_1_6"/>
<dbReference type="Proteomes" id="UP000001952">
    <property type="component" value="Chromosome"/>
</dbReference>
<dbReference type="GO" id="GO:0005829">
    <property type="term" value="C:cytosol"/>
    <property type="evidence" value="ECO:0007669"/>
    <property type="project" value="TreeGrafter"/>
</dbReference>
<dbReference type="GO" id="GO:0005525">
    <property type="term" value="F:GTP binding"/>
    <property type="evidence" value="ECO:0007669"/>
    <property type="project" value="UniProtKB-UniRule"/>
</dbReference>
<dbReference type="GO" id="GO:0003924">
    <property type="term" value="F:GTPase activity"/>
    <property type="evidence" value="ECO:0007669"/>
    <property type="project" value="InterPro"/>
</dbReference>
<dbReference type="GO" id="GO:0097216">
    <property type="term" value="F:guanosine tetraphosphate binding"/>
    <property type="evidence" value="ECO:0007669"/>
    <property type="project" value="UniProtKB-ARBA"/>
</dbReference>
<dbReference type="GO" id="GO:0016150">
    <property type="term" value="F:translation release factor activity, codon nonspecific"/>
    <property type="evidence" value="ECO:0007669"/>
    <property type="project" value="TreeGrafter"/>
</dbReference>
<dbReference type="GO" id="GO:0016149">
    <property type="term" value="F:translation release factor activity, codon specific"/>
    <property type="evidence" value="ECO:0007669"/>
    <property type="project" value="UniProtKB-UniRule"/>
</dbReference>
<dbReference type="GO" id="GO:0006449">
    <property type="term" value="P:regulation of translational termination"/>
    <property type="evidence" value="ECO:0007669"/>
    <property type="project" value="UniProtKB-UniRule"/>
</dbReference>
<dbReference type="CDD" id="cd04169">
    <property type="entry name" value="RF3"/>
    <property type="match status" value="1"/>
</dbReference>
<dbReference type="CDD" id="cd03689">
    <property type="entry name" value="RF3_II"/>
    <property type="match status" value="1"/>
</dbReference>
<dbReference type="CDD" id="cd16259">
    <property type="entry name" value="RF3_III"/>
    <property type="match status" value="1"/>
</dbReference>
<dbReference type="FunFam" id="2.40.30.10:FF:000040">
    <property type="entry name" value="Peptide chain release factor 3"/>
    <property type="match status" value="1"/>
</dbReference>
<dbReference type="FunFam" id="3.30.70.3280:FF:000001">
    <property type="entry name" value="Peptide chain release factor 3"/>
    <property type="match status" value="1"/>
</dbReference>
<dbReference type="FunFam" id="3.40.50.300:FF:000184">
    <property type="entry name" value="Peptide chain release factor 3"/>
    <property type="match status" value="1"/>
</dbReference>
<dbReference type="FunFam" id="3.40.50.300:FF:000253">
    <property type="entry name" value="Peptide chain release factor 3"/>
    <property type="match status" value="1"/>
</dbReference>
<dbReference type="Gene3D" id="3.40.50.300">
    <property type="entry name" value="P-loop containing nucleotide triphosphate hydrolases"/>
    <property type="match status" value="3"/>
</dbReference>
<dbReference type="Gene3D" id="3.30.70.3280">
    <property type="entry name" value="Peptide chain release factor 3, domain III"/>
    <property type="match status" value="1"/>
</dbReference>
<dbReference type="HAMAP" id="MF_00072">
    <property type="entry name" value="Rel_fac_3"/>
    <property type="match status" value="1"/>
</dbReference>
<dbReference type="InterPro" id="IPR053905">
    <property type="entry name" value="EF-G-like_DII"/>
</dbReference>
<dbReference type="InterPro" id="IPR035647">
    <property type="entry name" value="EFG_III/V"/>
</dbReference>
<dbReference type="InterPro" id="IPR031157">
    <property type="entry name" value="G_TR_CS"/>
</dbReference>
<dbReference type="InterPro" id="IPR027417">
    <property type="entry name" value="P-loop_NTPase"/>
</dbReference>
<dbReference type="InterPro" id="IPR004548">
    <property type="entry name" value="PrfC"/>
</dbReference>
<dbReference type="InterPro" id="IPR032090">
    <property type="entry name" value="RF3_C"/>
</dbReference>
<dbReference type="InterPro" id="IPR038467">
    <property type="entry name" value="RF3_dom_3_sf"/>
</dbReference>
<dbReference type="InterPro" id="IPR041732">
    <property type="entry name" value="RF3_GTP-bd"/>
</dbReference>
<dbReference type="InterPro" id="IPR005225">
    <property type="entry name" value="Small_GTP-bd"/>
</dbReference>
<dbReference type="InterPro" id="IPR000795">
    <property type="entry name" value="T_Tr_GTP-bd_dom"/>
</dbReference>
<dbReference type="InterPro" id="IPR009000">
    <property type="entry name" value="Transl_B-barrel_sf"/>
</dbReference>
<dbReference type="NCBIfam" id="TIGR00503">
    <property type="entry name" value="prfC"/>
    <property type="match status" value="1"/>
</dbReference>
<dbReference type="NCBIfam" id="NF001964">
    <property type="entry name" value="PRK00741.1"/>
    <property type="match status" value="1"/>
</dbReference>
<dbReference type="NCBIfam" id="TIGR00231">
    <property type="entry name" value="small_GTP"/>
    <property type="match status" value="1"/>
</dbReference>
<dbReference type="PANTHER" id="PTHR43556">
    <property type="entry name" value="PEPTIDE CHAIN RELEASE FACTOR RF3"/>
    <property type="match status" value="1"/>
</dbReference>
<dbReference type="PANTHER" id="PTHR43556:SF2">
    <property type="entry name" value="PEPTIDE CHAIN RELEASE FACTOR RF3"/>
    <property type="match status" value="1"/>
</dbReference>
<dbReference type="Pfam" id="PF22042">
    <property type="entry name" value="EF-G_D2"/>
    <property type="match status" value="1"/>
</dbReference>
<dbReference type="Pfam" id="PF00009">
    <property type="entry name" value="GTP_EFTU"/>
    <property type="match status" value="1"/>
</dbReference>
<dbReference type="Pfam" id="PF16658">
    <property type="entry name" value="RF3_C"/>
    <property type="match status" value="1"/>
</dbReference>
<dbReference type="PRINTS" id="PR00315">
    <property type="entry name" value="ELONGATNFCT"/>
</dbReference>
<dbReference type="SUPFAM" id="SSF54980">
    <property type="entry name" value="EF-G C-terminal domain-like"/>
    <property type="match status" value="1"/>
</dbReference>
<dbReference type="SUPFAM" id="SSF52540">
    <property type="entry name" value="P-loop containing nucleoside triphosphate hydrolases"/>
    <property type="match status" value="1"/>
</dbReference>
<dbReference type="SUPFAM" id="SSF50447">
    <property type="entry name" value="Translation proteins"/>
    <property type="match status" value="1"/>
</dbReference>
<dbReference type="PROSITE" id="PS00301">
    <property type="entry name" value="G_TR_1"/>
    <property type="match status" value="1"/>
</dbReference>
<dbReference type="PROSITE" id="PS51722">
    <property type="entry name" value="G_TR_2"/>
    <property type="match status" value="1"/>
</dbReference>
<accession>Q1R270</accession>
<reference key="1">
    <citation type="journal article" date="2006" name="Proc. Natl. Acad. Sci. U.S.A.">
        <title>Identification of genes subject to positive selection in uropathogenic strains of Escherichia coli: a comparative genomics approach.</title>
        <authorList>
            <person name="Chen S.L."/>
            <person name="Hung C.-S."/>
            <person name="Xu J."/>
            <person name="Reigstad C.S."/>
            <person name="Magrini V."/>
            <person name="Sabo A."/>
            <person name="Blasiar D."/>
            <person name="Bieri T."/>
            <person name="Meyer R.R."/>
            <person name="Ozersky P."/>
            <person name="Armstrong J.R."/>
            <person name="Fulton R.S."/>
            <person name="Latreille J.P."/>
            <person name="Spieth J."/>
            <person name="Hooton T.M."/>
            <person name="Mardis E.R."/>
            <person name="Hultgren S.J."/>
            <person name="Gordon J.I."/>
        </authorList>
    </citation>
    <scope>NUCLEOTIDE SEQUENCE [LARGE SCALE GENOMIC DNA]</scope>
    <source>
        <strain>UTI89 / UPEC</strain>
    </source>
</reference>